<sequence>MLNFDLLTTDGLARRGRMTLNHGVVETPIFMPVGTYGAVKAMSPVELKDIGAQIILGNTFHLWLRPALEVIDAHKGLHGFVGWDKPMLTDSGGFQVFSLGDLRKITEEGVHFASPINGDRLFLSPEISMQIQRRLNSDIVMQFDECTPYQIDGRPATEAEAAASMRMSLRWAQRSRNEFERERNPNALFGIVQGGMFEPLRDESLAGLQAIDADAGGQGFGGYAIGGLSVGEPKEDMIRVLQHVAPRLPANKPHYLMGVGTPEDLVAGVAAGIDMFDCVMPTRNARNGWLFTRFGDIKIKNAVHRNDPRPLDETCGCYTCRNFSRAYLHHLQRVGEILGARLNTIHNLHYYLELMADMRTAIESHSFAVFRARFAADRARGAL</sequence>
<dbReference type="EC" id="2.4.2.29" evidence="1"/>
<dbReference type="EMBL" id="AL646052">
    <property type="protein sequence ID" value="CAD16420.1"/>
    <property type="molecule type" value="Genomic_DNA"/>
</dbReference>
<dbReference type="RefSeq" id="WP_011002620.1">
    <property type="nucleotide sequence ID" value="NC_003295.1"/>
</dbReference>
<dbReference type="SMR" id="Q8XVW4"/>
<dbReference type="STRING" id="267608.RSc2713"/>
<dbReference type="EnsemblBacteria" id="CAD16420">
    <property type="protein sequence ID" value="CAD16420"/>
    <property type="gene ID" value="RSc2713"/>
</dbReference>
<dbReference type="KEGG" id="rso:RSc2713"/>
<dbReference type="PATRIC" id="fig|267608.8.peg.2758"/>
<dbReference type="eggNOG" id="COG0343">
    <property type="taxonomic scope" value="Bacteria"/>
</dbReference>
<dbReference type="HOGENOM" id="CLU_022060_0_1_4"/>
<dbReference type="UniPathway" id="UPA00392"/>
<dbReference type="Proteomes" id="UP000001436">
    <property type="component" value="Chromosome"/>
</dbReference>
<dbReference type="GO" id="GO:0005829">
    <property type="term" value="C:cytosol"/>
    <property type="evidence" value="ECO:0007669"/>
    <property type="project" value="TreeGrafter"/>
</dbReference>
<dbReference type="GO" id="GO:0046872">
    <property type="term" value="F:metal ion binding"/>
    <property type="evidence" value="ECO:0007669"/>
    <property type="project" value="UniProtKB-KW"/>
</dbReference>
<dbReference type="GO" id="GO:0008479">
    <property type="term" value="F:tRNA-guanosine(34) queuine transglycosylase activity"/>
    <property type="evidence" value="ECO:0007669"/>
    <property type="project" value="UniProtKB-UniRule"/>
</dbReference>
<dbReference type="GO" id="GO:0008616">
    <property type="term" value="P:queuosine biosynthetic process"/>
    <property type="evidence" value="ECO:0007669"/>
    <property type="project" value="UniProtKB-UniRule"/>
</dbReference>
<dbReference type="GO" id="GO:0002099">
    <property type="term" value="P:tRNA wobble guanine modification"/>
    <property type="evidence" value="ECO:0007669"/>
    <property type="project" value="TreeGrafter"/>
</dbReference>
<dbReference type="GO" id="GO:0101030">
    <property type="term" value="P:tRNA-guanine transglycosylation"/>
    <property type="evidence" value="ECO:0007669"/>
    <property type="project" value="InterPro"/>
</dbReference>
<dbReference type="FunFam" id="3.20.20.105:FF:000001">
    <property type="entry name" value="Queuine tRNA-ribosyltransferase"/>
    <property type="match status" value="1"/>
</dbReference>
<dbReference type="Gene3D" id="3.20.20.105">
    <property type="entry name" value="Queuine tRNA-ribosyltransferase-like"/>
    <property type="match status" value="1"/>
</dbReference>
<dbReference type="HAMAP" id="MF_00168">
    <property type="entry name" value="Q_tRNA_Tgt"/>
    <property type="match status" value="1"/>
</dbReference>
<dbReference type="InterPro" id="IPR050076">
    <property type="entry name" value="ArchSynthase1/Queuine_TRR"/>
</dbReference>
<dbReference type="InterPro" id="IPR004803">
    <property type="entry name" value="TGT"/>
</dbReference>
<dbReference type="InterPro" id="IPR036511">
    <property type="entry name" value="TGT-like_sf"/>
</dbReference>
<dbReference type="InterPro" id="IPR002616">
    <property type="entry name" value="tRNA_ribo_trans-like"/>
</dbReference>
<dbReference type="NCBIfam" id="TIGR00430">
    <property type="entry name" value="Q_tRNA_tgt"/>
    <property type="match status" value="1"/>
</dbReference>
<dbReference type="NCBIfam" id="TIGR00449">
    <property type="entry name" value="tgt_general"/>
    <property type="match status" value="1"/>
</dbReference>
<dbReference type="PANTHER" id="PTHR46499">
    <property type="entry name" value="QUEUINE TRNA-RIBOSYLTRANSFERASE"/>
    <property type="match status" value="1"/>
</dbReference>
<dbReference type="PANTHER" id="PTHR46499:SF1">
    <property type="entry name" value="QUEUINE TRNA-RIBOSYLTRANSFERASE"/>
    <property type="match status" value="1"/>
</dbReference>
<dbReference type="Pfam" id="PF01702">
    <property type="entry name" value="TGT"/>
    <property type="match status" value="1"/>
</dbReference>
<dbReference type="SUPFAM" id="SSF51713">
    <property type="entry name" value="tRNA-guanine transglycosylase"/>
    <property type="match status" value="1"/>
</dbReference>
<protein>
    <recommendedName>
        <fullName evidence="1">Queuine tRNA-ribosyltransferase</fullName>
        <ecNumber evidence="1">2.4.2.29</ecNumber>
    </recommendedName>
    <alternativeName>
        <fullName evidence="1">Guanine insertion enzyme</fullName>
    </alternativeName>
    <alternativeName>
        <fullName evidence="1">tRNA-guanine transglycosylase</fullName>
    </alternativeName>
</protein>
<organism>
    <name type="scientific">Ralstonia nicotianae (strain ATCC BAA-1114 / GMI1000)</name>
    <name type="common">Ralstonia solanacearum</name>
    <dbReference type="NCBI Taxonomy" id="267608"/>
    <lineage>
        <taxon>Bacteria</taxon>
        <taxon>Pseudomonadati</taxon>
        <taxon>Pseudomonadota</taxon>
        <taxon>Betaproteobacteria</taxon>
        <taxon>Burkholderiales</taxon>
        <taxon>Burkholderiaceae</taxon>
        <taxon>Ralstonia</taxon>
        <taxon>Ralstonia solanacearum species complex</taxon>
    </lineage>
</organism>
<gene>
    <name evidence="1" type="primary">tgt</name>
    <name type="ordered locus">RSc2713</name>
    <name type="ORF">RS00008</name>
</gene>
<reference key="1">
    <citation type="journal article" date="2002" name="Nature">
        <title>Genome sequence of the plant pathogen Ralstonia solanacearum.</title>
        <authorList>
            <person name="Salanoubat M."/>
            <person name="Genin S."/>
            <person name="Artiguenave F."/>
            <person name="Gouzy J."/>
            <person name="Mangenot S."/>
            <person name="Arlat M."/>
            <person name="Billault A."/>
            <person name="Brottier P."/>
            <person name="Camus J.-C."/>
            <person name="Cattolico L."/>
            <person name="Chandler M."/>
            <person name="Choisne N."/>
            <person name="Claudel-Renard C."/>
            <person name="Cunnac S."/>
            <person name="Demange N."/>
            <person name="Gaspin C."/>
            <person name="Lavie M."/>
            <person name="Moisan A."/>
            <person name="Robert C."/>
            <person name="Saurin W."/>
            <person name="Schiex T."/>
            <person name="Siguier P."/>
            <person name="Thebault P."/>
            <person name="Whalen M."/>
            <person name="Wincker P."/>
            <person name="Levy M."/>
            <person name="Weissenbach J."/>
            <person name="Boucher C.A."/>
        </authorList>
    </citation>
    <scope>NUCLEOTIDE SEQUENCE [LARGE SCALE GENOMIC DNA]</scope>
    <source>
        <strain>ATCC BAA-1114 / GMI1000</strain>
    </source>
</reference>
<proteinExistence type="inferred from homology"/>
<comment type="function">
    <text evidence="1">Catalyzes the base-exchange of a guanine (G) residue with the queuine precursor 7-aminomethyl-7-deazaguanine (PreQ1) at position 34 (anticodon wobble position) in tRNAs with GU(N) anticodons (tRNA-Asp, -Asn, -His and -Tyr). Catalysis occurs through a double-displacement mechanism. The nucleophile active site attacks the C1' of nucleotide 34 to detach the guanine base from the RNA, forming a covalent enzyme-RNA intermediate. The proton acceptor active site deprotonates the incoming PreQ1, allowing a nucleophilic attack on the C1' of the ribose to form the product. After dissociation, two additional enzymatic reactions on the tRNA convert PreQ1 to queuine (Q), resulting in the hypermodified nucleoside queuosine (7-(((4,5-cis-dihydroxy-2-cyclopenten-1-yl)amino)methyl)-7-deazaguanosine).</text>
</comment>
<comment type="catalytic activity">
    <reaction evidence="1">
        <text>7-aminomethyl-7-carbaguanine + guanosine(34) in tRNA = 7-aminomethyl-7-carbaguanosine(34) in tRNA + guanine</text>
        <dbReference type="Rhea" id="RHEA:24104"/>
        <dbReference type="Rhea" id="RHEA-COMP:10341"/>
        <dbReference type="Rhea" id="RHEA-COMP:10342"/>
        <dbReference type="ChEBI" id="CHEBI:16235"/>
        <dbReference type="ChEBI" id="CHEBI:58703"/>
        <dbReference type="ChEBI" id="CHEBI:74269"/>
        <dbReference type="ChEBI" id="CHEBI:82833"/>
        <dbReference type="EC" id="2.4.2.29"/>
    </reaction>
</comment>
<comment type="cofactor">
    <cofactor evidence="1">
        <name>Zn(2+)</name>
        <dbReference type="ChEBI" id="CHEBI:29105"/>
    </cofactor>
    <text evidence="1">Binds 1 zinc ion per subunit.</text>
</comment>
<comment type="pathway">
    <text evidence="1">tRNA modification; tRNA-queuosine biosynthesis.</text>
</comment>
<comment type="subunit">
    <text evidence="1">Homodimer. Within each dimer, one monomer is responsible for RNA recognition and catalysis, while the other monomer binds to the replacement base PreQ1.</text>
</comment>
<comment type="similarity">
    <text evidence="1">Belongs to the queuine tRNA-ribosyltransferase family.</text>
</comment>
<keyword id="KW-0328">Glycosyltransferase</keyword>
<keyword id="KW-0479">Metal-binding</keyword>
<keyword id="KW-0671">Queuosine biosynthesis</keyword>
<keyword id="KW-1185">Reference proteome</keyword>
<keyword id="KW-0808">Transferase</keyword>
<keyword id="KW-0819">tRNA processing</keyword>
<keyword id="KW-0862">Zinc</keyword>
<name>TGT_RALN1</name>
<accession>Q8XVW4</accession>
<evidence type="ECO:0000255" key="1">
    <source>
        <dbReference type="HAMAP-Rule" id="MF_00168"/>
    </source>
</evidence>
<feature type="chain" id="PRO_0000135509" description="Queuine tRNA-ribosyltransferase">
    <location>
        <begin position="1"/>
        <end position="383"/>
    </location>
</feature>
<feature type="region of interest" description="RNA binding" evidence="1">
    <location>
        <begin position="258"/>
        <end position="264"/>
    </location>
</feature>
<feature type="region of interest" description="RNA binding; important for wobble base 34 recognition" evidence="1">
    <location>
        <begin position="282"/>
        <end position="286"/>
    </location>
</feature>
<feature type="active site" description="Proton acceptor" evidence="1">
    <location>
        <position position="90"/>
    </location>
</feature>
<feature type="active site" description="Nucleophile" evidence="1">
    <location>
        <position position="277"/>
    </location>
</feature>
<feature type="binding site" evidence="1">
    <location>
        <begin position="90"/>
        <end position="94"/>
    </location>
    <ligand>
        <name>substrate</name>
    </ligand>
</feature>
<feature type="binding site" evidence="1">
    <location>
        <position position="144"/>
    </location>
    <ligand>
        <name>substrate</name>
    </ligand>
</feature>
<feature type="binding site" evidence="1">
    <location>
        <position position="193"/>
    </location>
    <ligand>
        <name>substrate</name>
    </ligand>
</feature>
<feature type="binding site" evidence="1">
    <location>
        <position position="227"/>
    </location>
    <ligand>
        <name>substrate</name>
    </ligand>
</feature>
<feature type="binding site" evidence="1">
    <location>
        <position position="315"/>
    </location>
    <ligand>
        <name>Zn(2+)</name>
        <dbReference type="ChEBI" id="CHEBI:29105"/>
    </ligand>
</feature>
<feature type="binding site" evidence="1">
    <location>
        <position position="317"/>
    </location>
    <ligand>
        <name>Zn(2+)</name>
        <dbReference type="ChEBI" id="CHEBI:29105"/>
    </ligand>
</feature>
<feature type="binding site" evidence="1">
    <location>
        <position position="320"/>
    </location>
    <ligand>
        <name>Zn(2+)</name>
        <dbReference type="ChEBI" id="CHEBI:29105"/>
    </ligand>
</feature>
<feature type="binding site" evidence="1">
    <location>
        <position position="346"/>
    </location>
    <ligand>
        <name>Zn(2+)</name>
        <dbReference type="ChEBI" id="CHEBI:29105"/>
    </ligand>
</feature>